<evidence type="ECO:0000255" key="1">
    <source>
        <dbReference type="HAMAP-Rule" id="MF_00106"/>
    </source>
</evidence>
<accession>B5BFU8</accession>
<organism>
    <name type="scientific">Salmonella paratyphi A (strain AKU_12601)</name>
    <dbReference type="NCBI Taxonomy" id="554290"/>
    <lineage>
        <taxon>Bacteria</taxon>
        <taxon>Pseudomonadati</taxon>
        <taxon>Pseudomonadota</taxon>
        <taxon>Gammaproteobacteria</taxon>
        <taxon>Enterobacterales</taxon>
        <taxon>Enterobacteriaceae</taxon>
        <taxon>Salmonella</taxon>
    </lineage>
</organism>
<dbReference type="EC" id="4.2.1.8" evidence="1"/>
<dbReference type="EMBL" id="FM200053">
    <property type="protein sequence ID" value="CAR61046.1"/>
    <property type="molecule type" value="Genomic_DNA"/>
</dbReference>
<dbReference type="RefSeq" id="WP_000815491.1">
    <property type="nucleotide sequence ID" value="NC_011147.1"/>
</dbReference>
<dbReference type="SMR" id="B5BFU8"/>
<dbReference type="KEGG" id="sek:SSPA2801"/>
<dbReference type="HOGENOM" id="CLU_058621_2_0_6"/>
<dbReference type="UniPathway" id="UPA00246"/>
<dbReference type="Proteomes" id="UP000001869">
    <property type="component" value="Chromosome"/>
</dbReference>
<dbReference type="GO" id="GO:0008198">
    <property type="term" value="F:ferrous iron binding"/>
    <property type="evidence" value="ECO:0007669"/>
    <property type="project" value="TreeGrafter"/>
</dbReference>
<dbReference type="GO" id="GO:0030145">
    <property type="term" value="F:manganese ion binding"/>
    <property type="evidence" value="ECO:0007669"/>
    <property type="project" value="TreeGrafter"/>
</dbReference>
<dbReference type="GO" id="GO:0008927">
    <property type="term" value="F:mannonate dehydratase activity"/>
    <property type="evidence" value="ECO:0007669"/>
    <property type="project" value="UniProtKB-UniRule"/>
</dbReference>
<dbReference type="GO" id="GO:0042840">
    <property type="term" value="P:D-glucuronate catabolic process"/>
    <property type="evidence" value="ECO:0007669"/>
    <property type="project" value="TreeGrafter"/>
</dbReference>
<dbReference type="FunFam" id="3.20.20.150:FF:000004">
    <property type="entry name" value="Mannonate dehydratase"/>
    <property type="match status" value="1"/>
</dbReference>
<dbReference type="FunFam" id="3.20.20.150:FF:000005">
    <property type="entry name" value="Mannonate dehydratase"/>
    <property type="match status" value="1"/>
</dbReference>
<dbReference type="Gene3D" id="3.20.20.150">
    <property type="entry name" value="Divalent-metal-dependent TIM barrel enzymes"/>
    <property type="match status" value="2"/>
</dbReference>
<dbReference type="HAMAP" id="MF_00106">
    <property type="entry name" value="UxuA"/>
    <property type="match status" value="1"/>
</dbReference>
<dbReference type="InterPro" id="IPR004628">
    <property type="entry name" value="Man_deHydtase"/>
</dbReference>
<dbReference type="InterPro" id="IPR036237">
    <property type="entry name" value="Xyl_isomerase-like_sf"/>
</dbReference>
<dbReference type="NCBIfam" id="NF003027">
    <property type="entry name" value="PRK03906.1"/>
    <property type="match status" value="1"/>
</dbReference>
<dbReference type="NCBIfam" id="TIGR00695">
    <property type="entry name" value="uxuA"/>
    <property type="match status" value="1"/>
</dbReference>
<dbReference type="PANTHER" id="PTHR30387">
    <property type="entry name" value="MANNONATE DEHYDRATASE"/>
    <property type="match status" value="1"/>
</dbReference>
<dbReference type="PANTHER" id="PTHR30387:SF2">
    <property type="entry name" value="MANNONATE DEHYDRATASE"/>
    <property type="match status" value="1"/>
</dbReference>
<dbReference type="Pfam" id="PF03786">
    <property type="entry name" value="UxuA"/>
    <property type="match status" value="1"/>
</dbReference>
<dbReference type="PIRSF" id="PIRSF016049">
    <property type="entry name" value="Man_dehyd"/>
    <property type="match status" value="1"/>
</dbReference>
<dbReference type="SUPFAM" id="SSF51658">
    <property type="entry name" value="Xylose isomerase-like"/>
    <property type="match status" value="1"/>
</dbReference>
<protein>
    <recommendedName>
        <fullName evidence="1">Mannonate dehydratase</fullName>
        <ecNumber evidence="1">4.2.1.8</ecNumber>
    </recommendedName>
    <alternativeName>
        <fullName evidence="1">D-mannonate hydro-lyase</fullName>
    </alternativeName>
</protein>
<gene>
    <name evidence="1" type="primary">uxuA</name>
    <name type="ordered locus">SSPA2801</name>
</gene>
<proteinExistence type="inferred from homology"/>
<feature type="chain" id="PRO_1000094223" description="Mannonate dehydratase">
    <location>
        <begin position="1"/>
        <end position="394"/>
    </location>
</feature>
<comment type="function">
    <text evidence="1">Catalyzes the dehydration of D-mannonate.</text>
</comment>
<comment type="catalytic activity">
    <reaction evidence="1">
        <text>D-mannonate = 2-dehydro-3-deoxy-D-gluconate + H2O</text>
        <dbReference type="Rhea" id="RHEA:20097"/>
        <dbReference type="ChEBI" id="CHEBI:15377"/>
        <dbReference type="ChEBI" id="CHEBI:17767"/>
        <dbReference type="ChEBI" id="CHEBI:57990"/>
        <dbReference type="EC" id="4.2.1.8"/>
    </reaction>
</comment>
<comment type="cofactor">
    <cofactor evidence="1">
        <name>Fe(2+)</name>
        <dbReference type="ChEBI" id="CHEBI:29033"/>
    </cofactor>
    <cofactor evidence="1">
        <name>Mn(2+)</name>
        <dbReference type="ChEBI" id="CHEBI:29035"/>
    </cofactor>
</comment>
<comment type="pathway">
    <text evidence="1">Carbohydrate metabolism; pentose and glucuronate interconversion.</text>
</comment>
<comment type="similarity">
    <text evidence="1">Belongs to the mannonate dehydratase family.</text>
</comment>
<sequence length="394" mass="44951">MKQTWRWYGPNDPVTLSDVRQAGATGVVTALHHIPNGEIWSVDEIQKRKAIVEEAGLEWSVVESVPIHEDIKTHTGQYDLWIKNYQQTLRNLAQCGIYTVCYNFMPVLDWTRTDLEYVLPDGSKALRFDQIEFAAFELHILKRPGAEADYTAEEIAQAERRFATMSEEDKARLTRNIIAGLPGAEEGYTLEQFRQHLATYKDIDKAKLREHFAYFLKAIIPVADEVGVRMAVHPDDPPRPILGLPRIVSTIEDMQWMVETVNSMANGFTMCTGSYGVRADNDLVDMIKQFGPRIYFTHLRSTLREENPKTFHEAAHLHGDVDMYEVVKAIVEEEHRRKAEGSDDLIPMRPDHGHQMLDDLKKKTNPGYSAIGRLKGLAEVRGVELAIQRAFFSK</sequence>
<keyword id="KW-0408">Iron</keyword>
<keyword id="KW-0456">Lyase</keyword>
<keyword id="KW-0464">Manganese</keyword>
<name>UXUA_SALPK</name>
<reference key="1">
    <citation type="journal article" date="2009" name="BMC Genomics">
        <title>Pseudogene accumulation in the evolutionary histories of Salmonella enterica serovars Paratyphi A and Typhi.</title>
        <authorList>
            <person name="Holt K.E."/>
            <person name="Thomson N.R."/>
            <person name="Wain J."/>
            <person name="Langridge G.C."/>
            <person name="Hasan R."/>
            <person name="Bhutta Z.A."/>
            <person name="Quail M.A."/>
            <person name="Norbertczak H."/>
            <person name="Walker D."/>
            <person name="Simmonds M."/>
            <person name="White B."/>
            <person name="Bason N."/>
            <person name="Mungall K."/>
            <person name="Dougan G."/>
            <person name="Parkhill J."/>
        </authorList>
    </citation>
    <scope>NUCLEOTIDE SEQUENCE [LARGE SCALE GENOMIC DNA]</scope>
    <source>
        <strain>AKU_12601</strain>
    </source>
</reference>